<dbReference type="PIR" id="S02179">
    <property type="entry name" value="S02179"/>
</dbReference>
<dbReference type="SMR" id="P05946"/>
<dbReference type="Allergome" id="6095">
    <property type="allergen name" value="Pon l 4"/>
</dbReference>
<dbReference type="Allergome" id="6096">
    <property type="allergen name" value="Pon l 4.0101"/>
</dbReference>
<dbReference type="iPTMnet" id="P05946"/>
<dbReference type="GO" id="GO:0005509">
    <property type="term" value="F:calcium ion binding"/>
    <property type="evidence" value="ECO:0007669"/>
    <property type="project" value="InterPro"/>
</dbReference>
<dbReference type="Gene3D" id="1.10.238.10">
    <property type="entry name" value="EF-hand"/>
    <property type="match status" value="1"/>
</dbReference>
<dbReference type="InterPro" id="IPR011992">
    <property type="entry name" value="EF-hand-dom_pair"/>
</dbReference>
<dbReference type="InterPro" id="IPR018247">
    <property type="entry name" value="EF_Hand_1_Ca_BS"/>
</dbReference>
<dbReference type="InterPro" id="IPR002048">
    <property type="entry name" value="EF_hand_dom"/>
</dbReference>
<dbReference type="Pfam" id="PF13202">
    <property type="entry name" value="EF-hand_5"/>
    <property type="match status" value="1"/>
</dbReference>
<dbReference type="Pfam" id="PF13499">
    <property type="entry name" value="EF-hand_7"/>
    <property type="match status" value="1"/>
</dbReference>
<dbReference type="SMART" id="SM00054">
    <property type="entry name" value="EFh"/>
    <property type="match status" value="2"/>
</dbReference>
<dbReference type="SUPFAM" id="SSF47473">
    <property type="entry name" value="EF-hand"/>
    <property type="match status" value="1"/>
</dbReference>
<dbReference type="PROSITE" id="PS00018">
    <property type="entry name" value="EF_HAND_1"/>
    <property type="match status" value="3"/>
</dbReference>
<dbReference type="PROSITE" id="PS50222">
    <property type="entry name" value="EF_HAND_2"/>
    <property type="match status" value="3"/>
</dbReference>
<proteinExistence type="evidence at protein level"/>
<name>SCP1_ASTLP</name>
<comment type="function">
    <text>Like parvalbumins, SCPs seem to be more abundant in fast contracting muscles, but no functional relationship can be established from this distribution.</text>
</comment>
<comment type="subunit">
    <text>SCPs from crayfish, lobster, and shrimp are polymorphic dimers.</text>
</comment>
<comment type="miscellaneous">
    <text>The sarcoplasmic calcium-binding proteins are abundant in the muscle of arthropods, mollusks, annelids, and protochordates.</text>
</comment>
<comment type="miscellaneous">
    <text>This protein has three functional calcium-binding sites; potential site 4 has lost affinity for calcium.</text>
</comment>
<keyword id="KW-0007">Acetylation</keyword>
<keyword id="KW-0106">Calcium</keyword>
<keyword id="KW-0903">Direct protein sequencing</keyword>
<keyword id="KW-0479">Metal-binding</keyword>
<keyword id="KW-0514">Muscle protein</keyword>
<keyword id="KW-0677">Repeat</keyword>
<feature type="chain" id="PRO_0000073631" description="Sarcoplasmic calcium-binding protein 1">
    <location>
        <begin position="1"/>
        <end position="192"/>
    </location>
</feature>
<feature type="domain" description="EF-hand 1" evidence="1">
    <location>
        <begin position="4"/>
        <end position="39"/>
    </location>
</feature>
<feature type="domain" description="EF-hand 2" evidence="1">
    <location>
        <begin position="56"/>
        <end position="91"/>
    </location>
</feature>
<feature type="domain" description="EF-hand 3" evidence="1">
    <location>
        <begin position="100"/>
        <end position="135"/>
    </location>
</feature>
<feature type="domain" description="EF-hand 4" evidence="1">
    <location>
        <begin position="136"/>
        <end position="171"/>
    </location>
</feature>
<feature type="binding site" evidence="1">
    <location>
        <position position="17"/>
    </location>
    <ligand>
        <name>Ca(2+)</name>
        <dbReference type="ChEBI" id="CHEBI:29108"/>
        <label>1</label>
    </ligand>
</feature>
<feature type="binding site" evidence="1">
    <location>
        <position position="19"/>
    </location>
    <ligand>
        <name>Ca(2+)</name>
        <dbReference type="ChEBI" id="CHEBI:29108"/>
        <label>1</label>
    </ligand>
</feature>
<feature type="binding site" evidence="1">
    <location>
        <position position="21"/>
    </location>
    <ligand>
        <name>Ca(2+)</name>
        <dbReference type="ChEBI" id="CHEBI:29108"/>
        <label>1</label>
    </ligand>
</feature>
<feature type="binding site" evidence="1">
    <location>
        <position position="28"/>
    </location>
    <ligand>
        <name>Ca(2+)</name>
        <dbReference type="ChEBI" id="CHEBI:29108"/>
        <label>1</label>
    </ligand>
</feature>
<feature type="binding site" evidence="1">
    <location>
        <position position="69"/>
    </location>
    <ligand>
        <name>Ca(2+)</name>
        <dbReference type="ChEBI" id="CHEBI:29108"/>
        <label>2</label>
    </ligand>
</feature>
<feature type="binding site" evidence="1">
    <location>
        <position position="71"/>
    </location>
    <ligand>
        <name>Ca(2+)</name>
        <dbReference type="ChEBI" id="CHEBI:29108"/>
        <label>2</label>
    </ligand>
</feature>
<feature type="binding site" evidence="1">
    <location>
        <position position="73"/>
    </location>
    <ligand>
        <name>Ca(2+)</name>
        <dbReference type="ChEBI" id="CHEBI:29108"/>
        <label>2</label>
    </ligand>
</feature>
<feature type="binding site" evidence="1">
    <location>
        <position position="75"/>
    </location>
    <ligand>
        <name>Ca(2+)</name>
        <dbReference type="ChEBI" id="CHEBI:29108"/>
        <label>2</label>
    </ligand>
</feature>
<feature type="binding site" evidence="1">
    <location>
        <position position="80"/>
    </location>
    <ligand>
        <name>Ca(2+)</name>
        <dbReference type="ChEBI" id="CHEBI:29108"/>
        <label>2</label>
    </ligand>
</feature>
<feature type="binding site" evidence="1">
    <location>
        <position position="113"/>
    </location>
    <ligand>
        <name>Ca(2+)</name>
        <dbReference type="ChEBI" id="CHEBI:29108"/>
        <label>3</label>
    </ligand>
</feature>
<feature type="binding site" evidence="1">
    <location>
        <position position="115"/>
    </location>
    <ligand>
        <name>Ca(2+)</name>
        <dbReference type="ChEBI" id="CHEBI:29108"/>
        <label>3</label>
    </ligand>
</feature>
<feature type="binding site" evidence="1">
    <location>
        <position position="117"/>
    </location>
    <ligand>
        <name>Ca(2+)</name>
        <dbReference type="ChEBI" id="CHEBI:29108"/>
        <label>3</label>
    </ligand>
</feature>
<feature type="binding site" evidence="1">
    <location>
        <position position="124"/>
    </location>
    <ligand>
        <name>Ca(2+)</name>
        <dbReference type="ChEBI" id="CHEBI:29108"/>
        <label>3</label>
    </ligand>
</feature>
<feature type="modified residue" description="N-acetylalanine" evidence="2">
    <location>
        <position position="1"/>
    </location>
</feature>
<feature type="sequence variant" description="In 1/3 of the chains.">
    <original>I</original>
    <variation>V</variation>
    <location>
        <position position="78"/>
    </location>
</feature>
<feature type="sequence variant" description="In 1/3 of the chains.">
    <original>V</original>
    <variation>I</variation>
    <location>
        <position position="112"/>
    </location>
</feature>
<evidence type="ECO:0000255" key="1">
    <source>
        <dbReference type="PROSITE-ProRule" id="PRU00448"/>
    </source>
</evidence>
<evidence type="ECO:0000269" key="2">
    <source>
    </source>
</evidence>
<organism>
    <name type="scientific">Astacus leptodactylus</name>
    <name type="common">Turkish narrow-clawed crayfish</name>
    <name type="synonym">Pontastacus leptodactylus</name>
    <dbReference type="NCBI Taxonomy" id="6717"/>
    <lineage>
        <taxon>Eukaryota</taxon>
        <taxon>Metazoa</taxon>
        <taxon>Ecdysozoa</taxon>
        <taxon>Arthropoda</taxon>
        <taxon>Crustacea</taxon>
        <taxon>Multicrustacea</taxon>
        <taxon>Malacostraca</taxon>
        <taxon>Eumalacostraca</taxon>
        <taxon>Eucarida</taxon>
        <taxon>Decapoda</taxon>
        <taxon>Pleocyemata</taxon>
        <taxon>Astacidea</taxon>
        <taxon>Astacoidea</taxon>
        <taxon>Astacidae</taxon>
        <taxon>Astacus</taxon>
    </lineage>
</organism>
<reference key="1">
    <citation type="journal article" date="1989" name="FEBS Lett.">
        <title>Complete amino acid sequence of the sarcoplasmic calcium-binding protein (SCP-I) from crayfish (Astacus leptodactylus).</title>
        <authorList>
            <person name="Jauregui-Adell J."/>
            <person name="Wnuk W."/>
            <person name="Cox J.A."/>
        </authorList>
    </citation>
    <scope>PROTEIN SEQUENCE</scope>
    <scope>ACETYLATION AT ALA-1</scope>
</reference>
<protein>
    <recommendedName>
        <fullName>Sarcoplasmic calcium-binding protein 1</fullName>
    </recommendedName>
    <alternativeName>
        <fullName>Sarcoplasmic calcium-binding protein I</fullName>
        <shortName>SCP I</shortName>
    </alternativeName>
</protein>
<accession>P05946</accession>
<sequence>AYSWDNRVKYVVRYMYDIDNNGFLDKNDFECLALRNTLIEGRGEFNEAAYANNQKIMSNLWNEIAELADFNKDGEVTIDEFKKAVQNVCVGKAFATFPAAFKVFIANQFKTVDVNGDGLVGVDEYRLDCISRSAFANIKEIDDAYNKLATDADKKAGGISLARYQELYAQFISNPDESANAVYLFGPLKEVQ</sequence>